<feature type="chain" id="PRO_1000013450" description="Large ribosomal subunit protein bL34">
    <location>
        <begin position="1"/>
        <end position="46"/>
    </location>
</feature>
<protein>
    <recommendedName>
        <fullName evidence="1">Large ribosomal subunit protein bL34</fullName>
    </recommendedName>
    <alternativeName>
        <fullName evidence="2">50S ribosomal protein L34</fullName>
    </alternativeName>
</protein>
<dbReference type="EMBL" id="CP000038">
    <property type="protein sequence ID" value="AAZ90201.1"/>
    <property type="molecule type" value="Genomic_DNA"/>
</dbReference>
<dbReference type="RefSeq" id="WP_000831330.1">
    <property type="nucleotide sequence ID" value="NC_007384.1"/>
</dbReference>
<dbReference type="SMR" id="Q3YWB1"/>
<dbReference type="GeneID" id="98190980"/>
<dbReference type="KEGG" id="ssn:SSON_3653"/>
<dbReference type="HOGENOM" id="CLU_129938_2_1_6"/>
<dbReference type="Proteomes" id="UP000002529">
    <property type="component" value="Chromosome"/>
</dbReference>
<dbReference type="GO" id="GO:1990904">
    <property type="term" value="C:ribonucleoprotein complex"/>
    <property type="evidence" value="ECO:0007669"/>
    <property type="project" value="UniProtKB-KW"/>
</dbReference>
<dbReference type="GO" id="GO:0005840">
    <property type="term" value="C:ribosome"/>
    <property type="evidence" value="ECO:0007669"/>
    <property type="project" value="UniProtKB-KW"/>
</dbReference>
<dbReference type="GO" id="GO:0003735">
    <property type="term" value="F:structural constituent of ribosome"/>
    <property type="evidence" value="ECO:0007669"/>
    <property type="project" value="InterPro"/>
</dbReference>
<dbReference type="GO" id="GO:0006412">
    <property type="term" value="P:translation"/>
    <property type="evidence" value="ECO:0007669"/>
    <property type="project" value="UniProtKB-UniRule"/>
</dbReference>
<dbReference type="FunFam" id="1.10.287.3980:FF:000001">
    <property type="entry name" value="Mitochondrial ribosomal protein L34"/>
    <property type="match status" value="1"/>
</dbReference>
<dbReference type="Gene3D" id="1.10.287.3980">
    <property type="match status" value="1"/>
</dbReference>
<dbReference type="HAMAP" id="MF_00391">
    <property type="entry name" value="Ribosomal_bL34"/>
    <property type="match status" value="1"/>
</dbReference>
<dbReference type="InterPro" id="IPR000271">
    <property type="entry name" value="Ribosomal_bL34"/>
</dbReference>
<dbReference type="InterPro" id="IPR020939">
    <property type="entry name" value="Ribosomal_bL34_CS"/>
</dbReference>
<dbReference type="NCBIfam" id="TIGR01030">
    <property type="entry name" value="rpmH_bact"/>
    <property type="match status" value="1"/>
</dbReference>
<dbReference type="PANTHER" id="PTHR14503:SF4">
    <property type="entry name" value="LARGE RIBOSOMAL SUBUNIT PROTEIN BL34M"/>
    <property type="match status" value="1"/>
</dbReference>
<dbReference type="PANTHER" id="PTHR14503">
    <property type="entry name" value="MITOCHONDRIAL RIBOSOMAL PROTEIN 34 FAMILY MEMBER"/>
    <property type="match status" value="1"/>
</dbReference>
<dbReference type="Pfam" id="PF00468">
    <property type="entry name" value="Ribosomal_L34"/>
    <property type="match status" value="1"/>
</dbReference>
<dbReference type="PROSITE" id="PS00784">
    <property type="entry name" value="RIBOSOMAL_L34"/>
    <property type="match status" value="1"/>
</dbReference>
<organism>
    <name type="scientific">Shigella sonnei (strain Ss046)</name>
    <dbReference type="NCBI Taxonomy" id="300269"/>
    <lineage>
        <taxon>Bacteria</taxon>
        <taxon>Pseudomonadati</taxon>
        <taxon>Pseudomonadota</taxon>
        <taxon>Gammaproteobacteria</taxon>
        <taxon>Enterobacterales</taxon>
        <taxon>Enterobacteriaceae</taxon>
        <taxon>Shigella</taxon>
    </lineage>
</organism>
<accession>Q3YWB1</accession>
<evidence type="ECO:0000255" key="1">
    <source>
        <dbReference type="HAMAP-Rule" id="MF_00391"/>
    </source>
</evidence>
<evidence type="ECO:0000305" key="2"/>
<name>RL34_SHISS</name>
<comment type="similarity">
    <text evidence="1">Belongs to the bacterial ribosomal protein bL34 family.</text>
</comment>
<reference key="1">
    <citation type="journal article" date="2005" name="Nucleic Acids Res.">
        <title>Genome dynamics and diversity of Shigella species, the etiologic agents of bacillary dysentery.</title>
        <authorList>
            <person name="Yang F."/>
            <person name="Yang J."/>
            <person name="Zhang X."/>
            <person name="Chen L."/>
            <person name="Jiang Y."/>
            <person name="Yan Y."/>
            <person name="Tang X."/>
            <person name="Wang J."/>
            <person name="Xiong Z."/>
            <person name="Dong J."/>
            <person name="Xue Y."/>
            <person name="Zhu Y."/>
            <person name="Xu X."/>
            <person name="Sun L."/>
            <person name="Chen S."/>
            <person name="Nie H."/>
            <person name="Peng J."/>
            <person name="Xu J."/>
            <person name="Wang Y."/>
            <person name="Yuan Z."/>
            <person name="Wen Y."/>
            <person name="Yao Z."/>
            <person name="Shen Y."/>
            <person name="Qiang B."/>
            <person name="Hou Y."/>
            <person name="Yu J."/>
            <person name="Jin Q."/>
        </authorList>
    </citation>
    <scope>NUCLEOTIDE SEQUENCE [LARGE SCALE GENOMIC DNA]</scope>
    <source>
        <strain>Ss046</strain>
    </source>
</reference>
<sequence>MKRTFQPSVLKRNRSHGFRARMATKNGRQVLARRRAKGRARLTVSK</sequence>
<proteinExistence type="inferred from homology"/>
<keyword id="KW-1185">Reference proteome</keyword>
<keyword id="KW-0687">Ribonucleoprotein</keyword>
<keyword id="KW-0689">Ribosomal protein</keyword>
<gene>
    <name evidence="1" type="primary">rpmH</name>
    <name type="ordered locus">SSON_3653</name>
</gene>